<keyword id="KW-0119">Carbohydrate metabolism</keyword>
<keyword id="KW-0313">Glucose metabolism</keyword>
<keyword id="KW-0521">NADP</keyword>
<keyword id="KW-0560">Oxidoreductase</keyword>
<keyword id="KW-1185">Reference proteome</keyword>
<proteinExistence type="inferred from homology"/>
<accession>O51581</accession>
<dbReference type="EC" id="1.1.1.49" evidence="1"/>
<dbReference type="EMBL" id="AE000783">
    <property type="protein sequence ID" value="AAB91531.1"/>
    <property type="molecule type" value="Genomic_DNA"/>
</dbReference>
<dbReference type="PIR" id="C70179">
    <property type="entry name" value="C70179"/>
</dbReference>
<dbReference type="RefSeq" id="NP_212770.1">
    <property type="nucleotide sequence ID" value="NC_001318.1"/>
</dbReference>
<dbReference type="RefSeq" id="WP_002656376.1">
    <property type="nucleotide sequence ID" value="NC_001318.1"/>
</dbReference>
<dbReference type="SMR" id="O51581"/>
<dbReference type="STRING" id="224326.BB_0636"/>
<dbReference type="PaxDb" id="224326-BB_0636"/>
<dbReference type="EnsemblBacteria" id="AAB91531">
    <property type="protein sequence ID" value="AAB91531"/>
    <property type="gene ID" value="BB_0636"/>
</dbReference>
<dbReference type="GeneID" id="56567446"/>
<dbReference type="KEGG" id="bbu:BB_0636"/>
<dbReference type="PATRIC" id="fig|224326.49.peg.1027"/>
<dbReference type="HOGENOM" id="CLU_013524_5_0_12"/>
<dbReference type="OrthoDB" id="9802739at2"/>
<dbReference type="UniPathway" id="UPA00115">
    <property type="reaction ID" value="UER00408"/>
</dbReference>
<dbReference type="Proteomes" id="UP000001807">
    <property type="component" value="Chromosome"/>
</dbReference>
<dbReference type="GO" id="GO:0005829">
    <property type="term" value="C:cytosol"/>
    <property type="evidence" value="ECO:0007669"/>
    <property type="project" value="TreeGrafter"/>
</dbReference>
<dbReference type="GO" id="GO:0004345">
    <property type="term" value="F:glucose-6-phosphate dehydrogenase activity"/>
    <property type="evidence" value="ECO:0007669"/>
    <property type="project" value="UniProtKB-UniRule"/>
</dbReference>
<dbReference type="GO" id="GO:0050661">
    <property type="term" value="F:NADP binding"/>
    <property type="evidence" value="ECO:0007669"/>
    <property type="project" value="UniProtKB-UniRule"/>
</dbReference>
<dbReference type="GO" id="GO:0006006">
    <property type="term" value="P:glucose metabolic process"/>
    <property type="evidence" value="ECO:0007669"/>
    <property type="project" value="UniProtKB-KW"/>
</dbReference>
<dbReference type="GO" id="GO:0009051">
    <property type="term" value="P:pentose-phosphate shunt, oxidative branch"/>
    <property type="evidence" value="ECO:0007669"/>
    <property type="project" value="TreeGrafter"/>
</dbReference>
<dbReference type="Gene3D" id="3.30.360.10">
    <property type="entry name" value="Dihydrodipicolinate Reductase, domain 2"/>
    <property type="match status" value="1"/>
</dbReference>
<dbReference type="Gene3D" id="3.40.50.720">
    <property type="entry name" value="NAD(P)-binding Rossmann-like Domain"/>
    <property type="match status" value="1"/>
</dbReference>
<dbReference type="HAMAP" id="MF_00966">
    <property type="entry name" value="G6PD"/>
    <property type="match status" value="1"/>
</dbReference>
<dbReference type="InterPro" id="IPR001282">
    <property type="entry name" value="G6P_DH"/>
</dbReference>
<dbReference type="InterPro" id="IPR019796">
    <property type="entry name" value="G6P_DH_AS"/>
</dbReference>
<dbReference type="InterPro" id="IPR022675">
    <property type="entry name" value="G6P_DH_C"/>
</dbReference>
<dbReference type="InterPro" id="IPR022674">
    <property type="entry name" value="G6P_DH_NAD-bd"/>
</dbReference>
<dbReference type="InterPro" id="IPR036291">
    <property type="entry name" value="NAD(P)-bd_dom_sf"/>
</dbReference>
<dbReference type="NCBIfam" id="TIGR00871">
    <property type="entry name" value="zwf"/>
    <property type="match status" value="1"/>
</dbReference>
<dbReference type="PANTHER" id="PTHR23429:SF0">
    <property type="entry name" value="GLUCOSE-6-PHOSPHATE 1-DEHYDROGENASE"/>
    <property type="match status" value="1"/>
</dbReference>
<dbReference type="PANTHER" id="PTHR23429">
    <property type="entry name" value="GLUCOSE-6-PHOSPHATE 1-DEHYDROGENASE G6PD"/>
    <property type="match status" value="1"/>
</dbReference>
<dbReference type="Pfam" id="PF02781">
    <property type="entry name" value="G6PD_C"/>
    <property type="match status" value="1"/>
</dbReference>
<dbReference type="Pfam" id="PF00479">
    <property type="entry name" value="G6PD_N"/>
    <property type="match status" value="1"/>
</dbReference>
<dbReference type="PIRSF" id="PIRSF000110">
    <property type="entry name" value="G6PD"/>
    <property type="match status" value="1"/>
</dbReference>
<dbReference type="PRINTS" id="PR00079">
    <property type="entry name" value="G6PDHDRGNASE"/>
</dbReference>
<dbReference type="SUPFAM" id="SSF55347">
    <property type="entry name" value="Glyceraldehyde-3-phosphate dehydrogenase-like, C-terminal domain"/>
    <property type="match status" value="1"/>
</dbReference>
<dbReference type="SUPFAM" id="SSF51735">
    <property type="entry name" value="NAD(P)-binding Rossmann-fold domains"/>
    <property type="match status" value="1"/>
</dbReference>
<dbReference type="PROSITE" id="PS00069">
    <property type="entry name" value="G6P_DEHYDROGENASE"/>
    <property type="match status" value="1"/>
</dbReference>
<feature type="chain" id="PRO_0000068111" description="Glucose-6-phosphate 1-dehydrogenase">
    <location>
        <begin position="1"/>
        <end position="478"/>
    </location>
</feature>
<feature type="active site" description="Proton acceptor" evidence="1">
    <location>
        <position position="234"/>
    </location>
</feature>
<feature type="binding site" evidence="1">
    <location>
        <position position="48"/>
    </location>
    <ligand>
        <name>NADP(+)</name>
        <dbReference type="ChEBI" id="CHEBI:58349"/>
    </ligand>
</feature>
<feature type="binding site" evidence="1">
    <location>
        <begin position="86"/>
        <end position="87"/>
    </location>
    <ligand>
        <name>NADP(+)</name>
        <dbReference type="ChEBI" id="CHEBI:58349"/>
    </ligand>
</feature>
<feature type="binding site" evidence="1">
    <location>
        <position position="142"/>
    </location>
    <ligand>
        <name>NADP(+)</name>
        <dbReference type="ChEBI" id="CHEBI:58349"/>
    </ligand>
</feature>
<feature type="binding site" evidence="1">
    <location>
        <position position="172"/>
    </location>
    <ligand>
        <name>substrate</name>
    </ligand>
</feature>
<feature type="binding site" evidence="1">
    <location>
        <position position="176"/>
    </location>
    <ligand>
        <name>substrate</name>
    </ligand>
</feature>
<feature type="binding site" evidence="1">
    <location>
        <position position="210"/>
    </location>
    <ligand>
        <name>substrate</name>
    </ligand>
</feature>
<feature type="binding site" evidence="1">
    <location>
        <position position="229"/>
    </location>
    <ligand>
        <name>substrate</name>
    </ligand>
</feature>
<feature type="binding site" evidence="1">
    <location>
        <position position="334"/>
    </location>
    <ligand>
        <name>substrate</name>
    </ligand>
</feature>
<feature type="binding site" evidence="1">
    <location>
        <position position="339"/>
    </location>
    <ligand>
        <name>substrate</name>
    </ligand>
</feature>
<organism>
    <name type="scientific">Borreliella burgdorferi (strain ATCC 35210 / DSM 4680 / CIP 102532 / B31)</name>
    <name type="common">Borrelia burgdorferi</name>
    <dbReference type="NCBI Taxonomy" id="224326"/>
    <lineage>
        <taxon>Bacteria</taxon>
        <taxon>Pseudomonadati</taxon>
        <taxon>Spirochaetota</taxon>
        <taxon>Spirochaetia</taxon>
        <taxon>Spirochaetales</taxon>
        <taxon>Borreliaceae</taxon>
        <taxon>Borreliella</taxon>
    </lineage>
</organism>
<name>G6PD_BORBU</name>
<comment type="function">
    <text evidence="1">Catalyzes the oxidation of glucose 6-phosphate to 6-phosphogluconolactone.</text>
</comment>
<comment type="catalytic activity">
    <reaction evidence="1">
        <text>D-glucose 6-phosphate + NADP(+) = 6-phospho-D-glucono-1,5-lactone + NADPH + H(+)</text>
        <dbReference type="Rhea" id="RHEA:15841"/>
        <dbReference type="ChEBI" id="CHEBI:15378"/>
        <dbReference type="ChEBI" id="CHEBI:57783"/>
        <dbReference type="ChEBI" id="CHEBI:57955"/>
        <dbReference type="ChEBI" id="CHEBI:58349"/>
        <dbReference type="ChEBI" id="CHEBI:61548"/>
        <dbReference type="EC" id="1.1.1.49"/>
    </reaction>
</comment>
<comment type="pathway">
    <text evidence="1">Carbohydrate degradation; pentose phosphate pathway; D-ribulose 5-phosphate from D-glucose 6-phosphate (oxidative stage): step 1/3.</text>
</comment>
<comment type="similarity">
    <text evidence="1">Belongs to the glucose-6-phosphate dehydrogenase family.</text>
</comment>
<reference key="1">
    <citation type="journal article" date="1997" name="Nature">
        <title>Genomic sequence of a Lyme disease spirochaete, Borrelia burgdorferi.</title>
        <authorList>
            <person name="Fraser C.M."/>
            <person name="Casjens S."/>
            <person name="Huang W.M."/>
            <person name="Sutton G.G."/>
            <person name="Clayton R.A."/>
            <person name="Lathigra R."/>
            <person name="White O."/>
            <person name="Ketchum K.A."/>
            <person name="Dodson R.J."/>
            <person name="Hickey E.K."/>
            <person name="Gwinn M.L."/>
            <person name="Dougherty B.A."/>
            <person name="Tomb J.-F."/>
            <person name="Fleischmann R.D."/>
            <person name="Richardson D.L."/>
            <person name="Peterson J.D."/>
            <person name="Kerlavage A.R."/>
            <person name="Quackenbush J."/>
            <person name="Salzberg S.L."/>
            <person name="Hanson M."/>
            <person name="van Vugt R."/>
            <person name="Palmer N."/>
            <person name="Adams M.D."/>
            <person name="Gocayne J.D."/>
            <person name="Weidman J.F."/>
            <person name="Utterback T.R."/>
            <person name="Watthey L."/>
            <person name="McDonald L.A."/>
            <person name="Artiach P."/>
            <person name="Bowman C."/>
            <person name="Garland S.A."/>
            <person name="Fujii C."/>
            <person name="Cotton M.D."/>
            <person name="Horst K."/>
            <person name="Roberts K.M."/>
            <person name="Hatch B."/>
            <person name="Smith H.O."/>
            <person name="Venter J.C."/>
        </authorList>
    </citation>
    <scope>NUCLEOTIDE SEQUENCE [LARGE SCALE GENOMIC DNA]</scope>
    <source>
        <strain>ATCC 35210 / DSM 4680 / CIP 102532 / B31</strain>
    </source>
</reference>
<gene>
    <name evidence="1" type="primary">zwf</name>
    <name type="ordered locus">BB_0636</name>
</gene>
<sequence length="478" mass="56113">MKERSVSNFDIVIFGVTGNLSRKKLIPSLFNLFKNKCISNFRVIGFSRKIFTDKEFRLYIKDSLWQEETDSLIEIFLNFFVYVFGDFNEKESYKNLFKFLDRSRETIYYLSTSPAFYGPIINHLKKYFLSEKLTLSKIVLEKPFGSSLETAKKLNSLLYSAFKEDQIYRIDHYLGKETVQNIFTFRFGNSIFENIWNNRYVDFVQITVAEELGLDGRVEYYDSVGALKDMVQNHILQLLSLVAMESPIKFDSEFIHDEKVKVLKSLRKISKEDIKNYIVKGQYIGSQVQGVFKKGYKDETEFLGNSNTETYLAMKVFINNWRWSGVPFYLRTGKGLARKFSEIYIQFKKPSFTLFNNSSVDFSNALIFRIQPRDGIEIKFNTKKPGYNYEIQTANMEFSYHGAFKRLFDEAYERLLLDAFLGDGTLYATSDEIESSWEFVSDIANKWADIEICNYFYGSEGPKEIDSILEKDHFWRKI</sequence>
<protein>
    <recommendedName>
        <fullName evidence="1">Glucose-6-phosphate 1-dehydrogenase</fullName>
        <shortName evidence="1">G6PD</shortName>
        <ecNumber evidence="1">1.1.1.49</ecNumber>
    </recommendedName>
</protein>
<evidence type="ECO:0000255" key="1">
    <source>
        <dbReference type="HAMAP-Rule" id="MF_00966"/>
    </source>
</evidence>